<proteinExistence type="evidence at transcript level"/>
<comment type="function">
    <text evidence="1">Putative gamma-glutamylcyclotransferase.</text>
</comment>
<comment type="tissue specificity">
    <text evidence="6">Ubiquitous.</text>
</comment>
<comment type="developmental stage">
    <text evidence="6">Peak of expression around the time of early inflorescence.</text>
</comment>
<comment type="induction">
    <text evidence="3 6">Up-regulated early after infection with P.syringae carrying avrRpt2 (PubMed:8742710). Expressed constitutively (PubMed:18214976).</text>
</comment>
<comment type="similarity">
    <text evidence="5">Belongs to the gamma-glutamylcyclotransferase family.</text>
</comment>
<protein>
    <recommendedName>
        <fullName evidence="5">Protein AIG2 A</fullName>
        <ecNumber evidence="5">2.3.2.-</ecNumber>
    </recommendedName>
    <alternativeName>
        <fullName evidence="4">Avirulence-induced gene 2 protein</fullName>
    </alternativeName>
    <alternativeName>
        <fullName evidence="5">Avirulence-induced gene 2 protein A</fullName>
    </alternativeName>
    <alternativeName>
        <fullName evidence="4">AvrRpt2-induced gene 2</fullName>
    </alternativeName>
    <alternativeName>
        <fullName evidence="4">Protein AIG2</fullName>
    </alternativeName>
    <alternativeName>
        <fullName evidence="1">Putative gamma-glutamylcyclotransferase</fullName>
    </alternativeName>
</protein>
<keyword id="KW-0012">Acyltransferase</keyword>
<keyword id="KW-1185">Reference proteome</keyword>
<keyword id="KW-0808">Transferase</keyword>
<gene>
    <name evidence="5" type="primary">AIG2A</name>
    <name evidence="4" type="synonym">AIG2</name>
    <name evidence="7" type="ordered locus">At3g28930</name>
    <name evidence="8" type="ORF">K5K13.3</name>
    <name type="ORF">K5K13_1</name>
</gene>
<feature type="chain" id="PRO_0000064512" description="Protein AIG2 A">
    <location>
        <begin position="1"/>
        <end position="170"/>
    </location>
</feature>
<feature type="region of interest" description="Disordered" evidence="2">
    <location>
        <begin position="147"/>
        <end position="170"/>
    </location>
</feature>
<feature type="compositionally biased region" description="Basic and acidic residues" evidence="2">
    <location>
        <begin position="147"/>
        <end position="162"/>
    </location>
</feature>
<feature type="active site" description="Proton acceptor" evidence="1">
    <location>
        <position position="83"/>
    </location>
</feature>
<feature type="binding site" evidence="1">
    <location>
        <begin position="15"/>
        <end position="20"/>
    </location>
    <ligand>
        <name>substrate</name>
    </ligand>
</feature>
<accession>P54121</accession>
<sequence>MTSSDQSPSHDVFVYGSFQEPAVVNLILECAPVMVSAQLHGYHLYRLKGRLHPCISPSDNGLINGKILTGLTDSQLESLDMIEGTEYVRKTVEVVLTDTLEKKQVETIVWANKDDPNMYGEWDFEEWKRLHMEKFIEAATKFMEWKKNPNGRSREEFEKFVQDDSSPASA</sequence>
<organism>
    <name type="scientific">Arabidopsis thaliana</name>
    <name type="common">Mouse-ear cress</name>
    <dbReference type="NCBI Taxonomy" id="3702"/>
    <lineage>
        <taxon>Eukaryota</taxon>
        <taxon>Viridiplantae</taxon>
        <taxon>Streptophyta</taxon>
        <taxon>Embryophyta</taxon>
        <taxon>Tracheophyta</taxon>
        <taxon>Spermatophyta</taxon>
        <taxon>Magnoliopsida</taxon>
        <taxon>eudicotyledons</taxon>
        <taxon>Gunneridae</taxon>
        <taxon>Pentapetalae</taxon>
        <taxon>rosids</taxon>
        <taxon>malvids</taxon>
        <taxon>Brassicales</taxon>
        <taxon>Brassicaceae</taxon>
        <taxon>Camelineae</taxon>
        <taxon>Arabidopsis</taxon>
    </lineage>
</organism>
<name>AIG2A_ARATH</name>
<reference key="1">
    <citation type="journal article" date="1996" name="Plant Cell">
        <title>Isolation of Arabidopsis genes that differentiate between resistance responses mediated by the RPS2 and RPM1 disease resistance genes.</title>
        <authorList>
            <person name="Reuber T.L."/>
            <person name="Ausubel F.M."/>
        </authorList>
    </citation>
    <scope>NUCLEOTIDE SEQUENCE [MRNA]</scope>
    <scope>INDUCTION</scope>
    <source>
        <strain>cv. Columbia</strain>
    </source>
</reference>
<reference key="2">
    <citation type="journal article" date="2000" name="DNA Res.">
        <title>Structural analysis of Arabidopsis thaliana chromosome 3. I. Sequence features of the regions of 4,504,864 bp covered by sixty P1 and TAC clones.</title>
        <authorList>
            <person name="Sato S."/>
            <person name="Nakamura Y."/>
            <person name="Kaneko T."/>
            <person name="Katoh T."/>
            <person name="Asamizu E."/>
            <person name="Tabata S."/>
        </authorList>
    </citation>
    <scope>NUCLEOTIDE SEQUENCE [LARGE SCALE GENOMIC DNA]</scope>
    <source>
        <strain>cv. Columbia</strain>
    </source>
</reference>
<reference key="3">
    <citation type="journal article" date="2017" name="Plant J.">
        <title>Araport11: a complete reannotation of the Arabidopsis thaliana reference genome.</title>
        <authorList>
            <person name="Cheng C.Y."/>
            <person name="Krishnakumar V."/>
            <person name="Chan A.P."/>
            <person name="Thibaud-Nissen F."/>
            <person name="Schobel S."/>
            <person name="Town C.D."/>
        </authorList>
    </citation>
    <scope>GENOME REANNOTATION</scope>
    <source>
        <strain>cv. Columbia</strain>
    </source>
</reference>
<reference key="4">
    <citation type="journal article" date="2003" name="Science">
        <title>Empirical analysis of transcriptional activity in the Arabidopsis genome.</title>
        <authorList>
            <person name="Yamada K."/>
            <person name="Lim J."/>
            <person name="Dale J.M."/>
            <person name="Chen H."/>
            <person name="Shinn P."/>
            <person name="Palm C.J."/>
            <person name="Southwick A.M."/>
            <person name="Wu H.C."/>
            <person name="Kim C.J."/>
            <person name="Nguyen M."/>
            <person name="Pham P.K."/>
            <person name="Cheuk R.F."/>
            <person name="Karlin-Newmann G."/>
            <person name="Liu S.X."/>
            <person name="Lam B."/>
            <person name="Sakano H."/>
            <person name="Wu T."/>
            <person name="Yu G."/>
            <person name="Miranda M."/>
            <person name="Quach H.L."/>
            <person name="Tripp M."/>
            <person name="Chang C.H."/>
            <person name="Lee J.M."/>
            <person name="Toriumi M.J."/>
            <person name="Chan M.M."/>
            <person name="Tang C.C."/>
            <person name="Onodera C.S."/>
            <person name="Deng J.M."/>
            <person name="Akiyama K."/>
            <person name="Ansari Y."/>
            <person name="Arakawa T."/>
            <person name="Banh J."/>
            <person name="Banno F."/>
            <person name="Bowser L."/>
            <person name="Brooks S.Y."/>
            <person name="Carninci P."/>
            <person name="Chao Q."/>
            <person name="Choy N."/>
            <person name="Enju A."/>
            <person name="Goldsmith A.D."/>
            <person name="Gurjal M."/>
            <person name="Hansen N.F."/>
            <person name="Hayashizaki Y."/>
            <person name="Johnson-Hopson C."/>
            <person name="Hsuan V.W."/>
            <person name="Iida K."/>
            <person name="Karnes M."/>
            <person name="Khan S."/>
            <person name="Koesema E."/>
            <person name="Ishida J."/>
            <person name="Jiang P.X."/>
            <person name="Jones T."/>
            <person name="Kawai J."/>
            <person name="Kamiya A."/>
            <person name="Meyers C."/>
            <person name="Nakajima M."/>
            <person name="Narusaka M."/>
            <person name="Seki M."/>
            <person name="Sakurai T."/>
            <person name="Satou M."/>
            <person name="Tamse R."/>
            <person name="Vaysberg M."/>
            <person name="Wallender E.K."/>
            <person name="Wong C."/>
            <person name="Yamamura Y."/>
            <person name="Yuan S."/>
            <person name="Shinozaki K."/>
            <person name="Davis R.W."/>
            <person name="Theologis A."/>
            <person name="Ecker J.R."/>
        </authorList>
    </citation>
    <scope>NUCLEOTIDE SEQUENCE [LARGE SCALE MRNA]</scope>
    <source>
        <strain>cv. Columbia</strain>
    </source>
</reference>
<reference key="5">
    <citation type="journal article" date="2008" name="Proteins">
        <title>Solution structure of At3g28950 from Arabidopsis thaliana.</title>
        <authorList>
            <person name="de la Cruz N.B."/>
            <person name="Peterson F.C."/>
            <person name="Volkman B.F."/>
        </authorList>
    </citation>
    <scope>GENE FAMILY</scope>
</reference>
<dbReference type="EC" id="2.3.2.-" evidence="5"/>
<dbReference type="EMBL" id="U40857">
    <property type="protein sequence ID" value="AAC49283.1"/>
    <property type="molecule type" value="mRNA"/>
</dbReference>
<dbReference type="EMBL" id="AB025615">
    <property type="protein sequence ID" value="BAA95744.1"/>
    <property type="molecule type" value="Genomic_DNA"/>
</dbReference>
<dbReference type="EMBL" id="CP002686">
    <property type="protein sequence ID" value="AEE77510.1"/>
    <property type="molecule type" value="Genomic_DNA"/>
</dbReference>
<dbReference type="EMBL" id="CP002686">
    <property type="protein sequence ID" value="ANM64138.1"/>
    <property type="molecule type" value="Genomic_DNA"/>
</dbReference>
<dbReference type="EMBL" id="AF372890">
    <property type="protein sequence ID" value="AAK49606.1"/>
    <property type="molecule type" value="mRNA"/>
</dbReference>
<dbReference type="EMBL" id="AY057725">
    <property type="protein sequence ID" value="AAL15355.1"/>
    <property type="molecule type" value="mRNA"/>
</dbReference>
<dbReference type="RefSeq" id="NP_001326185.1">
    <property type="nucleotide sequence ID" value="NM_001338977.1"/>
</dbReference>
<dbReference type="RefSeq" id="NP_189535.1">
    <property type="nucleotide sequence ID" value="NM_113814.5"/>
</dbReference>
<dbReference type="SMR" id="P54121"/>
<dbReference type="BioGRID" id="7858">
    <property type="interactions" value="1"/>
</dbReference>
<dbReference type="FunCoup" id="P54121">
    <property type="interactions" value="16"/>
</dbReference>
<dbReference type="STRING" id="3702.P54121"/>
<dbReference type="iPTMnet" id="P54121"/>
<dbReference type="PaxDb" id="3702-AT3G28930.1"/>
<dbReference type="ProteomicsDB" id="245009"/>
<dbReference type="DNASU" id="822529"/>
<dbReference type="EnsemblPlants" id="AT3G28930.1">
    <property type="protein sequence ID" value="AT3G28930.1"/>
    <property type="gene ID" value="AT3G28930"/>
</dbReference>
<dbReference type="EnsemblPlants" id="AT3G28930.3">
    <property type="protein sequence ID" value="AT3G28930.3"/>
    <property type="gene ID" value="AT3G28930"/>
</dbReference>
<dbReference type="GeneID" id="822529"/>
<dbReference type="Gramene" id="AT3G28930.1">
    <property type="protein sequence ID" value="AT3G28930.1"/>
    <property type="gene ID" value="AT3G28930"/>
</dbReference>
<dbReference type="Gramene" id="AT3G28930.3">
    <property type="protein sequence ID" value="AT3G28930.3"/>
    <property type="gene ID" value="AT3G28930"/>
</dbReference>
<dbReference type="KEGG" id="ath:AT3G28930"/>
<dbReference type="Araport" id="AT3G28930"/>
<dbReference type="TAIR" id="AT3G28930">
    <property type="gene designation" value="AIG2"/>
</dbReference>
<dbReference type="eggNOG" id="ENOG502S7T1">
    <property type="taxonomic scope" value="Eukaryota"/>
</dbReference>
<dbReference type="HOGENOM" id="CLU_093936_0_0_1"/>
<dbReference type="InParanoid" id="P54121"/>
<dbReference type="OMA" id="ECVPVMV"/>
<dbReference type="OrthoDB" id="1044435at2759"/>
<dbReference type="PhylomeDB" id="P54121"/>
<dbReference type="PRO" id="PR:P54121"/>
<dbReference type="Proteomes" id="UP000006548">
    <property type="component" value="Chromosome 3"/>
</dbReference>
<dbReference type="ExpressionAtlas" id="P54121">
    <property type="expression patterns" value="baseline and differential"/>
</dbReference>
<dbReference type="GO" id="GO:0005829">
    <property type="term" value="C:cytosol"/>
    <property type="evidence" value="ECO:0007005"/>
    <property type="project" value="TAIR"/>
</dbReference>
<dbReference type="GO" id="GO:0016746">
    <property type="term" value="F:acyltransferase activity"/>
    <property type="evidence" value="ECO:0007669"/>
    <property type="project" value="UniProtKB-KW"/>
</dbReference>
<dbReference type="GO" id="GO:0009617">
    <property type="term" value="P:response to bacterium"/>
    <property type="evidence" value="ECO:0000270"/>
    <property type="project" value="TAIR"/>
</dbReference>
<dbReference type="CDD" id="cd06661">
    <property type="entry name" value="GGCT_like"/>
    <property type="match status" value="1"/>
</dbReference>
<dbReference type="FunFam" id="3.10.490.10:FF:000022">
    <property type="entry name" value="Protein AIG2 B"/>
    <property type="match status" value="1"/>
</dbReference>
<dbReference type="Gene3D" id="6.10.250.210">
    <property type="match status" value="1"/>
</dbReference>
<dbReference type="Gene3D" id="3.10.490.10">
    <property type="entry name" value="Gamma-glutamyl cyclotransferase-like"/>
    <property type="match status" value="1"/>
</dbReference>
<dbReference type="InterPro" id="IPR045038">
    <property type="entry name" value="AIG2-like"/>
</dbReference>
<dbReference type="InterPro" id="IPR009288">
    <property type="entry name" value="AIG2-like_dom"/>
</dbReference>
<dbReference type="InterPro" id="IPR013024">
    <property type="entry name" value="GGCT-like"/>
</dbReference>
<dbReference type="InterPro" id="IPR036568">
    <property type="entry name" value="GGCT-like_sf"/>
</dbReference>
<dbReference type="PANTHER" id="PTHR31544">
    <property type="entry name" value="AIG2-LIKE PROTEIN D"/>
    <property type="match status" value="1"/>
</dbReference>
<dbReference type="PANTHER" id="PTHR31544:SF12">
    <property type="entry name" value="PROTEIN AIG2 A-RELATED"/>
    <property type="match status" value="1"/>
</dbReference>
<dbReference type="Pfam" id="PF06094">
    <property type="entry name" value="GGACT"/>
    <property type="match status" value="1"/>
</dbReference>
<dbReference type="SUPFAM" id="SSF110857">
    <property type="entry name" value="Gamma-glutamyl cyclotransferase-like"/>
    <property type="match status" value="1"/>
</dbReference>
<evidence type="ECO:0000250" key="1">
    <source>
        <dbReference type="UniProtKB" id="O75223"/>
    </source>
</evidence>
<evidence type="ECO:0000256" key="2">
    <source>
        <dbReference type="SAM" id="MobiDB-lite"/>
    </source>
</evidence>
<evidence type="ECO:0000269" key="3">
    <source>
    </source>
</evidence>
<evidence type="ECO:0000303" key="4">
    <source>
    </source>
</evidence>
<evidence type="ECO:0000305" key="5"/>
<evidence type="ECO:0000305" key="6">
    <source>
    </source>
</evidence>
<evidence type="ECO:0000312" key="7">
    <source>
        <dbReference type="Araport" id="AT3G28930"/>
    </source>
</evidence>
<evidence type="ECO:0000312" key="8">
    <source>
        <dbReference type="EMBL" id="BAA95744.1"/>
    </source>
</evidence>